<organism>
    <name type="scientific">Drosophila melanogaster</name>
    <name type="common">Fruit fly</name>
    <dbReference type="NCBI Taxonomy" id="7227"/>
    <lineage>
        <taxon>Eukaryota</taxon>
        <taxon>Metazoa</taxon>
        <taxon>Ecdysozoa</taxon>
        <taxon>Arthropoda</taxon>
        <taxon>Hexapoda</taxon>
        <taxon>Insecta</taxon>
        <taxon>Pterygota</taxon>
        <taxon>Neoptera</taxon>
        <taxon>Endopterygota</taxon>
        <taxon>Diptera</taxon>
        <taxon>Brachycera</taxon>
        <taxon>Muscomorpha</taxon>
        <taxon>Ephydroidea</taxon>
        <taxon>Drosophilidae</taxon>
        <taxon>Drosophila</taxon>
        <taxon>Sophophora</taxon>
    </lineage>
</organism>
<accession>P45594</accession>
<accession>C6SV25</accession>
<accession>Q9W1C4</accession>
<feature type="chain" id="PRO_0000214916" description="Cofilin/actin-depolymerizing factor homolog">
    <location>
        <begin position="1"/>
        <end position="148"/>
    </location>
</feature>
<feature type="domain" description="ADF-H" evidence="3">
    <location>
        <begin position="4"/>
        <end position="143"/>
    </location>
</feature>
<feature type="short sequence motif" description="Nuclear localization signal" evidence="2">
    <location>
        <begin position="19"/>
        <end position="23"/>
    </location>
</feature>
<feature type="mutagenesis site" description="Abolishes in vitro phosphorylation by LIMK1. Partial rescue of both the defective neuroblast proliferation and defective axon growth seen in null mutants." evidence="4 7">
    <original>S</original>
    <variation>A</variation>
    <location>
        <position position="3"/>
    </location>
</feature>
<feature type="mutagenesis site" description="No rescue of the defective neuroblast proliferation seen in null mutants but partial rescue of the defective axon growth." evidence="7">
    <original>S</original>
    <variation>E</variation>
    <location>
        <position position="3"/>
    </location>
</feature>
<feature type="mutagenesis site" description="Defective distal orientation of wing hairs and incorrect localization of the planar cell polarity proteins fz and stan/fmi; when associated with 139-AAALA-143." evidence="8">
    <original>V</original>
    <variation>Q</variation>
    <location>
        <position position="27"/>
    </location>
</feature>
<feature type="mutagenesis site" description="Defective distal orientation of wing hairs and incorrect localization of the planar cell polarity proteins fz and stan/fmi; when associated with Q-27." evidence="8">
    <original>EEKLR</original>
    <variation>AAALA</variation>
    <location>
        <begin position="139"/>
        <end position="143"/>
    </location>
</feature>
<feature type="helix" evidence="19">
    <location>
        <begin position="9"/>
        <end position="20"/>
    </location>
</feature>
<feature type="strand" evidence="19">
    <location>
        <begin position="26"/>
        <end position="32"/>
    </location>
</feature>
<feature type="turn" evidence="19">
    <location>
        <begin position="33"/>
        <end position="35"/>
    </location>
</feature>
<feature type="strand" evidence="19">
    <location>
        <begin position="36"/>
        <end position="43"/>
    </location>
</feature>
<feature type="helix" evidence="19">
    <location>
        <begin position="49"/>
        <end position="59"/>
    </location>
</feature>
<feature type="strand" evidence="19">
    <location>
        <begin position="61"/>
        <end position="63"/>
    </location>
</feature>
<feature type="strand" evidence="19">
    <location>
        <begin position="65"/>
        <end position="77"/>
    </location>
</feature>
<feature type="strand" evidence="19">
    <location>
        <begin position="80"/>
        <end position="94"/>
    </location>
</feature>
<feature type="helix" evidence="19">
    <location>
        <begin position="101"/>
        <end position="113"/>
    </location>
</feature>
<feature type="helix" evidence="19">
    <location>
        <begin position="114"/>
        <end position="116"/>
    </location>
</feature>
<feature type="strand" evidence="19">
    <location>
        <begin position="122"/>
        <end position="127"/>
    </location>
</feature>
<feature type="turn" evidence="19">
    <location>
        <begin position="130"/>
        <end position="132"/>
    </location>
</feature>
<feature type="helix" evidence="19">
    <location>
        <begin position="135"/>
        <end position="144"/>
    </location>
</feature>
<dbReference type="EMBL" id="U08217">
    <property type="protein sequence ID" value="AAA19856.1"/>
    <property type="molecule type" value="mRNA"/>
</dbReference>
<dbReference type="EMBL" id="U24490">
    <property type="protein sequence ID" value="AAC46962.1"/>
    <property type="molecule type" value="mRNA"/>
</dbReference>
<dbReference type="EMBL" id="U24676">
    <property type="protein sequence ID" value="AAC46963.1"/>
    <property type="molecule type" value="Genomic_DNA"/>
</dbReference>
<dbReference type="EMBL" id="AE013599">
    <property type="protein sequence ID" value="AAF47146.1"/>
    <property type="molecule type" value="Genomic_DNA"/>
</dbReference>
<dbReference type="EMBL" id="BT089017">
    <property type="protein sequence ID" value="ACT98664.1"/>
    <property type="molecule type" value="mRNA"/>
</dbReference>
<dbReference type="PIR" id="A57569">
    <property type="entry name" value="A57569"/>
</dbReference>
<dbReference type="RefSeq" id="NP_477034.1">
    <property type="nucleotide sequence ID" value="NM_057686.4"/>
</dbReference>
<dbReference type="PDB" id="2MV2">
    <property type="method" value="NMR"/>
    <property type="chains" value="A=1-148"/>
</dbReference>
<dbReference type="PDB" id="8OH4">
    <property type="method" value="EM"/>
    <property type="resolution" value="16.50 A"/>
    <property type="chains" value="I/J/K/L/M/N=1-148"/>
</dbReference>
<dbReference type="PDBsum" id="2MV2"/>
<dbReference type="PDBsum" id="8OH4"/>
<dbReference type="BMRB" id="P45594"/>
<dbReference type="EMDB" id="EMD-16877"/>
<dbReference type="SMR" id="P45594"/>
<dbReference type="BioGRID" id="63422">
    <property type="interactions" value="46"/>
</dbReference>
<dbReference type="DIP" id="DIP-20149N"/>
<dbReference type="FunCoup" id="P45594">
    <property type="interactions" value="1629"/>
</dbReference>
<dbReference type="IntAct" id="P45594">
    <property type="interactions" value="44"/>
</dbReference>
<dbReference type="STRING" id="7227.FBpp0072097"/>
<dbReference type="GlyGen" id="P45594">
    <property type="glycosylation" value="1 site, 1 O-linked glycan (1 site)"/>
</dbReference>
<dbReference type="iPTMnet" id="P45594"/>
<dbReference type="PaxDb" id="7227-FBpp0072097"/>
<dbReference type="DNASU" id="37841"/>
<dbReference type="EnsemblMetazoa" id="FBtr0072188">
    <property type="protein sequence ID" value="FBpp0072097"/>
    <property type="gene ID" value="FBgn0011726"/>
</dbReference>
<dbReference type="GeneID" id="37841"/>
<dbReference type="KEGG" id="dme:Dmel_CG4254"/>
<dbReference type="AGR" id="FB:FBgn0011726"/>
<dbReference type="CTD" id="37841"/>
<dbReference type="FlyBase" id="FBgn0011726">
    <property type="gene designation" value="tsr"/>
</dbReference>
<dbReference type="VEuPathDB" id="VectorBase:FBgn0011726"/>
<dbReference type="eggNOG" id="KOG1735">
    <property type="taxonomic scope" value="Eukaryota"/>
</dbReference>
<dbReference type="GeneTree" id="ENSGT00950000183000"/>
<dbReference type="HOGENOM" id="CLU_094004_3_1_1"/>
<dbReference type="InParanoid" id="P45594"/>
<dbReference type="OMA" id="ITFYSWS"/>
<dbReference type="OrthoDB" id="10249245at2759"/>
<dbReference type="PhylomeDB" id="P45594"/>
<dbReference type="SignaLink" id="P45594"/>
<dbReference type="BioGRID-ORCS" id="37841">
    <property type="hits" value="0 hits in 3 CRISPR screens"/>
</dbReference>
<dbReference type="ChiTaRS" id="tsr">
    <property type="organism name" value="fly"/>
</dbReference>
<dbReference type="EvolutionaryTrace" id="P45594"/>
<dbReference type="GenomeRNAi" id="37841"/>
<dbReference type="PRO" id="PR:P45594"/>
<dbReference type="Proteomes" id="UP000000803">
    <property type="component" value="Chromosome 2R"/>
</dbReference>
<dbReference type="Bgee" id="FBgn0011726">
    <property type="expression patterns" value="Expressed in eye disc (Drosophila) and 259 other cell types or tissues"/>
</dbReference>
<dbReference type="ExpressionAtlas" id="P45594">
    <property type="expression patterns" value="baseline and differential"/>
</dbReference>
<dbReference type="GO" id="GO:0015629">
    <property type="term" value="C:actin cytoskeleton"/>
    <property type="evidence" value="ECO:0000318"/>
    <property type="project" value="GO_Central"/>
</dbReference>
<dbReference type="GO" id="GO:0005737">
    <property type="term" value="C:cytoplasm"/>
    <property type="evidence" value="ECO:0000318"/>
    <property type="project" value="GO_Central"/>
</dbReference>
<dbReference type="GO" id="GO:0005829">
    <property type="term" value="C:cytosol"/>
    <property type="evidence" value="ECO:0007005"/>
    <property type="project" value="FlyBase"/>
</dbReference>
<dbReference type="GO" id="GO:0016363">
    <property type="term" value="C:nuclear matrix"/>
    <property type="evidence" value="ECO:0007669"/>
    <property type="project" value="UniProtKB-SubCell"/>
</dbReference>
<dbReference type="GO" id="GO:0005654">
    <property type="term" value="C:nucleoplasm"/>
    <property type="evidence" value="ECO:0007005"/>
    <property type="project" value="FlyBase"/>
</dbReference>
<dbReference type="GO" id="GO:0003779">
    <property type="term" value="F:actin binding"/>
    <property type="evidence" value="ECO:0000315"/>
    <property type="project" value="FlyBase"/>
</dbReference>
<dbReference type="GO" id="GO:0051015">
    <property type="term" value="F:actin filament binding"/>
    <property type="evidence" value="ECO:0000318"/>
    <property type="project" value="GO_Central"/>
</dbReference>
<dbReference type="GO" id="GO:0030042">
    <property type="term" value="P:actin filament depolymerization"/>
    <property type="evidence" value="ECO:0000315"/>
    <property type="project" value="UniProtKB"/>
</dbReference>
<dbReference type="GO" id="GO:0030043">
    <property type="term" value="P:actin filament fragmentation"/>
    <property type="evidence" value="ECO:0000318"/>
    <property type="project" value="GO_Central"/>
</dbReference>
<dbReference type="GO" id="GO:0007015">
    <property type="term" value="P:actin filament organization"/>
    <property type="evidence" value="ECO:0000315"/>
    <property type="project" value="FlyBase"/>
</dbReference>
<dbReference type="GO" id="GO:0030041">
    <property type="term" value="P:actin filament polymerization"/>
    <property type="evidence" value="ECO:0000315"/>
    <property type="project" value="FlyBase"/>
</dbReference>
<dbReference type="GO" id="GO:0051014">
    <property type="term" value="P:actin filament severing"/>
    <property type="evidence" value="ECO:0000318"/>
    <property type="project" value="GO_Central"/>
</dbReference>
<dbReference type="GO" id="GO:0000915">
    <property type="term" value="P:actomyosin contractile ring assembly"/>
    <property type="evidence" value="ECO:0000304"/>
    <property type="project" value="FlyBase"/>
</dbReference>
<dbReference type="GO" id="GO:0007409">
    <property type="term" value="P:axonogenesis"/>
    <property type="evidence" value="ECO:0000315"/>
    <property type="project" value="FlyBase"/>
</dbReference>
<dbReference type="GO" id="GO:0007298">
    <property type="term" value="P:border follicle cell migration"/>
    <property type="evidence" value="ECO:0000315"/>
    <property type="project" value="UniProtKB"/>
</dbReference>
<dbReference type="GO" id="GO:0051299">
    <property type="term" value="P:centrosome separation"/>
    <property type="evidence" value="ECO:0000315"/>
    <property type="project" value="UniProtKB"/>
</dbReference>
<dbReference type="GO" id="GO:0048749">
    <property type="term" value="P:compound eye development"/>
    <property type="evidence" value="ECO:0000316"/>
    <property type="project" value="FlyBase"/>
</dbReference>
<dbReference type="GO" id="GO:0001745">
    <property type="term" value="P:compound eye morphogenesis"/>
    <property type="evidence" value="ECO:0000315"/>
    <property type="project" value="FlyBase"/>
</dbReference>
<dbReference type="GO" id="GO:0010669">
    <property type="term" value="P:epithelial structure maintenance"/>
    <property type="evidence" value="ECO:0000315"/>
    <property type="project" value="UniProtKB"/>
</dbReference>
<dbReference type="GO" id="GO:0001737">
    <property type="term" value="P:establishment of imaginal disc-derived wing hair orientation"/>
    <property type="evidence" value="ECO:0000315"/>
    <property type="project" value="FlyBase"/>
</dbReference>
<dbReference type="GO" id="GO:0042067">
    <property type="term" value="P:establishment of ommatidial planar polarity"/>
    <property type="evidence" value="ECO:0000315"/>
    <property type="project" value="FlyBase"/>
</dbReference>
<dbReference type="GO" id="GO:0001736">
    <property type="term" value="P:establishment of planar polarity"/>
    <property type="evidence" value="ECO:0000315"/>
    <property type="project" value="FlyBase"/>
</dbReference>
<dbReference type="GO" id="GO:0008585">
    <property type="term" value="P:female gonad development"/>
    <property type="evidence" value="ECO:0000315"/>
    <property type="project" value="FlyBase"/>
</dbReference>
<dbReference type="GO" id="GO:0036011">
    <property type="term" value="P:imaginal disc-derived leg segmentation"/>
    <property type="evidence" value="ECO:0000315"/>
    <property type="project" value="FlyBase"/>
</dbReference>
<dbReference type="GO" id="GO:0030032">
    <property type="term" value="P:lamellipodium assembly"/>
    <property type="evidence" value="ECO:0000315"/>
    <property type="project" value="UniProtKB"/>
</dbReference>
<dbReference type="GO" id="GO:0033206">
    <property type="term" value="P:meiotic cytokinesis"/>
    <property type="evidence" value="ECO:0000315"/>
    <property type="project" value="UniProtKB"/>
</dbReference>
<dbReference type="GO" id="GO:0000281">
    <property type="term" value="P:mitotic cytokinesis"/>
    <property type="evidence" value="ECO:0000315"/>
    <property type="project" value="UniProtKB"/>
</dbReference>
<dbReference type="GO" id="GO:0016319">
    <property type="term" value="P:mushroom body development"/>
    <property type="evidence" value="ECO:0000315"/>
    <property type="project" value="FlyBase"/>
</dbReference>
<dbReference type="GO" id="GO:0050714">
    <property type="term" value="P:positive regulation of protein secretion"/>
    <property type="evidence" value="ECO:0000315"/>
    <property type="project" value="UniProtKB"/>
</dbReference>
<dbReference type="GO" id="GO:0010591">
    <property type="term" value="P:regulation of lamellipodium assembly"/>
    <property type="evidence" value="ECO:0000315"/>
    <property type="project" value="FlyBase"/>
</dbReference>
<dbReference type="GO" id="GO:0042052">
    <property type="term" value="P:rhabdomere development"/>
    <property type="evidence" value="ECO:0000315"/>
    <property type="project" value="FlyBase"/>
</dbReference>
<dbReference type="CDD" id="cd11286">
    <property type="entry name" value="ADF_cofilin_like"/>
    <property type="match status" value="1"/>
</dbReference>
<dbReference type="FunFam" id="3.40.20.10:FF:000044">
    <property type="entry name" value="Cofilin/actin-depolymerizing factor homolog"/>
    <property type="match status" value="1"/>
</dbReference>
<dbReference type="Gene3D" id="3.40.20.10">
    <property type="entry name" value="Severin"/>
    <property type="match status" value="1"/>
</dbReference>
<dbReference type="InterPro" id="IPR002108">
    <property type="entry name" value="ADF-H"/>
</dbReference>
<dbReference type="InterPro" id="IPR029006">
    <property type="entry name" value="ADF-H/Gelsolin-like_dom_sf"/>
</dbReference>
<dbReference type="InterPro" id="IPR017904">
    <property type="entry name" value="ADF/Cofilin"/>
</dbReference>
<dbReference type="PANTHER" id="PTHR11913">
    <property type="entry name" value="COFILIN-RELATED"/>
    <property type="match status" value="1"/>
</dbReference>
<dbReference type="Pfam" id="PF00241">
    <property type="entry name" value="Cofilin_ADF"/>
    <property type="match status" value="1"/>
</dbReference>
<dbReference type="SMART" id="SM00102">
    <property type="entry name" value="ADF"/>
    <property type="match status" value="1"/>
</dbReference>
<dbReference type="SUPFAM" id="SSF55753">
    <property type="entry name" value="Actin depolymerizing proteins"/>
    <property type="match status" value="1"/>
</dbReference>
<dbReference type="PROSITE" id="PS51263">
    <property type="entry name" value="ADF_H"/>
    <property type="match status" value="1"/>
</dbReference>
<gene>
    <name evidence="16 18" type="primary">tsr</name>
    <name type="synonym">Cadf</name>
    <name evidence="18" type="ORF">CG4254</name>
</gene>
<protein>
    <recommendedName>
        <fullName>Cofilin/actin-depolymerizing factor homolog</fullName>
    </recommendedName>
    <alternativeName>
        <fullName>Protein D61</fullName>
    </alternativeName>
    <alternativeName>
        <fullName evidence="16">Protein twinstar</fullName>
    </alternativeName>
</protein>
<name>CADF_DROME</name>
<comment type="function">
    <text evidence="5 7 8 9 10 11 12 14 15">Exhibits F-actin depolymerizing activity and regulates actin cytoskeleton dynamics (PubMed:21205790). Required for cytokinesis in both mitotic and meiotic cells and for aster migration and separation (PubMed:8522587). Promotes cell motility during ovary development and oogenesis (PubMed:11175754). During larval development, required for the cell rearrangement needed for formation of terminal filaments which are stacks of somatic cells that are important for the initiation of ovarioles (PubMed:11175754). Also required for border cell migration during oogenesis (PubMed:11175754). During border cell migration, required for actin turnover and lamellipodial protrusion (PubMed:21205790). Required for the establishment of planar cell polarity (PCP) where cells adopt a uniform orientation within the plane of an epithelium (PubMed:16571634). During establishment of PCP, required for the redistribution of the PCP core proteins fz and stan/fmi to the proximodistal cell boundary (PubMed:16571634). During pupal development, required for elongation of the retinal cell body and for rhabdomere morphogenesis (PubMed:18423434). Required for mushroom body neuroblast proliferation and axon growth (PubMed:15572110). Plays a role in the positive regulation of protein secretion (PubMed:20026655). Plays a role in the regulation of nuclear localization of actin (PubMed:22323606). Required for the maintenance of epithelial integrity by controlling cell junctions and is also necessary for cell survival and tissue growth through regulation of JNK and yki signaling (PubMed:27041568).</text>
</comment>
<comment type="subcellular location">
    <subcellularLocation>
        <location evidence="1">Cytoplasm</location>
        <location evidence="1">Cytoskeleton</location>
    </subcellularLocation>
    <subcellularLocation>
        <location evidence="1">Nucleus matrix</location>
    </subcellularLocation>
</comment>
<comment type="developmental stage">
    <text evidence="15">Expressed during all stages of development and peaks in late larval and pupal stages. Expressed in both male and female adults.</text>
</comment>
<comment type="PTM">
    <text evidence="4 7 13">Phosphorylated in vitro by protein kinase LIMK1 (PubMed:20026655). Phosphorylation is required for inactivation of tsr and for cell proliferation and axon growth (PubMed:15572110). Phosphorylation is negatively regulated by the panthothenate kinase fbl which catalyzes the first step in the conversion of panthothenic acid to coenzyme A (PubMed:22912811).</text>
</comment>
<comment type="PTM">
    <text evidence="6 7">Dephosphorylated by protein phosphatase ssh which activates tsr.</text>
</comment>
<comment type="disruption phenotype">
    <text evidence="5 7 9 14 15">Late larval or pupal lethality with mutants showing defects in cytokinesis in both mitotic and meiotic cells, abnormal accumulation of F-actin in mature primary spermatocytes, and defective aster migration where the asters remain in close proximity to each other rather than separating from each other and migrating around the periphery of the nuclear envelope as in the wild type (PubMed:8522587). Failure of terminal filament formation in the ovary at the third larval instar at 25 degrees Celsius but formation occurs at 18 degrees Celsius (PubMed:11175754). Significantly thinner retina than controls, significantly increased F-actin levels in pupal eye disks and defective rhabdomere morphogenesis (PubMed:18423434). Defective mushroom body neuroblast proliferation with newly hatched larvae containing significantly fewer neurons than controls and severe axon growth defects with mutants failing to extend axons beyond the peduncle (PubMed:15572110). RNAi-mediated knockdown in the wing results in increased F-actin levels, altered subcellular location of the transcriptional coactivator yki, strong expression of the yki target genes wg and ex, cell extrusion from the basement membrane, reduced levels of the junction proteins dlg1, arm and shg, up-regulation of Rho1, apoptosis and JNK signaling (PubMed:27041568).</text>
</comment>
<comment type="miscellaneous">
    <text evidence="16">The name 'twinstar' derives from the characteristic aberrant arrangement of asters seen in mutants.</text>
</comment>
<comment type="similarity">
    <text evidence="17">Belongs to the actin-binding proteins ADF family.</text>
</comment>
<proteinExistence type="evidence at protein level"/>
<evidence type="ECO:0000250" key="1"/>
<evidence type="ECO:0000255" key="2"/>
<evidence type="ECO:0000255" key="3">
    <source>
        <dbReference type="PROSITE-ProRule" id="PRU00599"/>
    </source>
</evidence>
<evidence type="ECO:0000269" key="4">
    <source>
    </source>
</evidence>
<evidence type="ECO:0000269" key="5">
    <source>
    </source>
</evidence>
<evidence type="ECO:0000269" key="6">
    <source>
    </source>
</evidence>
<evidence type="ECO:0000269" key="7">
    <source>
    </source>
</evidence>
<evidence type="ECO:0000269" key="8">
    <source>
    </source>
</evidence>
<evidence type="ECO:0000269" key="9">
    <source>
    </source>
</evidence>
<evidence type="ECO:0000269" key="10">
    <source>
    </source>
</evidence>
<evidence type="ECO:0000269" key="11">
    <source>
    </source>
</evidence>
<evidence type="ECO:0000269" key="12">
    <source>
    </source>
</evidence>
<evidence type="ECO:0000269" key="13">
    <source>
    </source>
</evidence>
<evidence type="ECO:0000269" key="14">
    <source>
    </source>
</evidence>
<evidence type="ECO:0000269" key="15">
    <source>
    </source>
</evidence>
<evidence type="ECO:0000303" key="16">
    <source>
    </source>
</evidence>
<evidence type="ECO:0000305" key="17"/>
<evidence type="ECO:0000312" key="18">
    <source>
        <dbReference type="FlyBase" id="FBgn0011726"/>
    </source>
</evidence>
<evidence type="ECO:0007829" key="19">
    <source>
        <dbReference type="PDB" id="2MV2"/>
    </source>
</evidence>
<reference key="1">
    <citation type="journal article" date="1994" name="Proc. Natl. Acad. Sci. U.S.A.">
        <title>Identification of Drosophila cytoskeletal proteins by induction of abnormal cell shape in fission yeast.</title>
        <authorList>
            <person name="Edwards K.A."/>
            <person name="Montague R.A."/>
            <person name="Shepard S."/>
            <person name="Edgar B.A."/>
            <person name="Erikson R.L."/>
            <person name="Kiehart D.P."/>
        </authorList>
    </citation>
    <scope>NUCLEOTIDE SEQUENCE [MRNA]</scope>
</reference>
<reference key="2">
    <citation type="journal article" date="1995" name="J. Cell Biol.">
        <title>Mutations in twinstar, a Drosophila gene encoding a cofilin/ADF homologue, result in defects in centrosome migration and cytokinesis.</title>
        <authorList>
            <person name="Gunsalus K.C."/>
            <person name="Bonaccorsi S."/>
            <person name="Williams E."/>
            <person name="Verni F."/>
            <person name="Gatti M."/>
            <person name="Goldberg M.L."/>
        </authorList>
    </citation>
    <scope>NUCLEOTIDE SEQUENCE [GENOMIC DNA / MRNA]</scope>
    <scope>FUNCTION</scope>
    <scope>DEVELOPMENTAL STAGE</scope>
    <scope>DISRUPTION PHENOTYPE</scope>
    <source>
        <strain>Oregon-R</strain>
    </source>
</reference>
<reference key="3">
    <citation type="journal article" date="2000" name="Science">
        <title>The genome sequence of Drosophila melanogaster.</title>
        <authorList>
            <person name="Adams M.D."/>
            <person name="Celniker S.E."/>
            <person name="Holt R.A."/>
            <person name="Evans C.A."/>
            <person name="Gocayne J.D."/>
            <person name="Amanatides P.G."/>
            <person name="Scherer S.E."/>
            <person name="Li P.W."/>
            <person name="Hoskins R.A."/>
            <person name="Galle R.F."/>
            <person name="George R.A."/>
            <person name="Lewis S.E."/>
            <person name="Richards S."/>
            <person name="Ashburner M."/>
            <person name="Henderson S.N."/>
            <person name="Sutton G.G."/>
            <person name="Wortman J.R."/>
            <person name="Yandell M.D."/>
            <person name="Zhang Q."/>
            <person name="Chen L.X."/>
            <person name="Brandon R.C."/>
            <person name="Rogers Y.-H.C."/>
            <person name="Blazej R.G."/>
            <person name="Champe M."/>
            <person name="Pfeiffer B.D."/>
            <person name="Wan K.H."/>
            <person name="Doyle C."/>
            <person name="Baxter E.G."/>
            <person name="Helt G."/>
            <person name="Nelson C.R."/>
            <person name="Miklos G.L.G."/>
            <person name="Abril J.F."/>
            <person name="Agbayani A."/>
            <person name="An H.-J."/>
            <person name="Andrews-Pfannkoch C."/>
            <person name="Baldwin D."/>
            <person name="Ballew R.M."/>
            <person name="Basu A."/>
            <person name="Baxendale J."/>
            <person name="Bayraktaroglu L."/>
            <person name="Beasley E.M."/>
            <person name="Beeson K.Y."/>
            <person name="Benos P.V."/>
            <person name="Berman B.P."/>
            <person name="Bhandari D."/>
            <person name="Bolshakov S."/>
            <person name="Borkova D."/>
            <person name="Botchan M.R."/>
            <person name="Bouck J."/>
            <person name="Brokstein P."/>
            <person name="Brottier P."/>
            <person name="Burtis K.C."/>
            <person name="Busam D.A."/>
            <person name="Butler H."/>
            <person name="Cadieu E."/>
            <person name="Center A."/>
            <person name="Chandra I."/>
            <person name="Cherry J.M."/>
            <person name="Cawley S."/>
            <person name="Dahlke C."/>
            <person name="Davenport L.B."/>
            <person name="Davies P."/>
            <person name="de Pablos B."/>
            <person name="Delcher A."/>
            <person name="Deng Z."/>
            <person name="Mays A.D."/>
            <person name="Dew I."/>
            <person name="Dietz S.M."/>
            <person name="Dodson K."/>
            <person name="Doup L.E."/>
            <person name="Downes M."/>
            <person name="Dugan-Rocha S."/>
            <person name="Dunkov B.C."/>
            <person name="Dunn P."/>
            <person name="Durbin K.J."/>
            <person name="Evangelista C.C."/>
            <person name="Ferraz C."/>
            <person name="Ferriera S."/>
            <person name="Fleischmann W."/>
            <person name="Fosler C."/>
            <person name="Gabrielian A.E."/>
            <person name="Garg N.S."/>
            <person name="Gelbart W.M."/>
            <person name="Glasser K."/>
            <person name="Glodek A."/>
            <person name="Gong F."/>
            <person name="Gorrell J.H."/>
            <person name="Gu Z."/>
            <person name="Guan P."/>
            <person name="Harris M."/>
            <person name="Harris N.L."/>
            <person name="Harvey D.A."/>
            <person name="Heiman T.J."/>
            <person name="Hernandez J.R."/>
            <person name="Houck J."/>
            <person name="Hostin D."/>
            <person name="Houston K.A."/>
            <person name="Howland T.J."/>
            <person name="Wei M.-H."/>
            <person name="Ibegwam C."/>
            <person name="Jalali M."/>
            <person name="Kalush F."/>
            <person name="Karpen G.H."/>
            <person name="Ke Z."/>
            <person name="Kennison J.A."/>
            <person name="Ketchum K.A."/>
            <person name="Kimmel B.E."/>
            <person name="Kodira C.D."/>
            <person name="Kraft C.L."/>
            <person name="Kravitz S."/>
            <person name="Kulp D."/>
            <person name="Lai Z."/>
            <person name="Lasko P."/>
            <person name="Lei Y."/>
            <person name="Levitsky A.A."/>
            <person name="Li J.H."/>
            <person name="Li Z."/>
            <person name="Liang Y."/>
            <person name="Lin X."/>
            <person name="Liu X."/>
            <person name="Mattei B."/>
            <person name="McIntosh T.C."/>
            <person name="McLeod M.P."/>
            <person name="McPherson D."/>
            <person name="Merkulov G."/>
            <person name="Milshina N.V."/>
            <person name="Mobarry C."/>
            <person name="Morris J."/>
            <person name="Moshrefi A."/>
            <person name="Mount S.M."/>
            <person name="Moy M."/>
            <person name="Murphy B."/>
            <person name="Murphy L."/>
            <person name="Muzny D.M."/>
            <person name="Nelson D.L."/>
            <person name="Nelson D.R."/>
            <person name="Nelson K.A."/>
            <person name="Nixon K."/>
            <person name="Nusskern D.R."/>
            <person name="Pacleb J.M."/>
            <person name="Palazzolo M."/>
            <person name="Pittman G.S."/>
            <person name="Pan S."/>
            <person name="Pollard J."/>
            <person name="Puri V."/>
            <person name="Reese M.G."/>
            <person name="Reinert K."/>
            <person name="Remington K."/>
            <person name="Saunders R.D.C."/>
            <person name="Scheeler F."/>
            <person name="Shen H."/>
            <person name="Shue B.C."/>
            <person name="Siden-Kiamos I."/>
            <person name="Simpson M."/>
            <person name="Skupski M.P."/>
            <person name="Smith T.J."/>
            <person name="Spier E."/>
            <person name="Spradling A.C."/>
            <person name="Stapleton M."/>
            <person name="Strong R."/>
            <person name="Sun E."/>
            <person name="Svirskas R."/>
            <person name="Tector C."/>
            <person name="Turner R."/>
            <person name="Venter E."/>
            <person name="Wang A.H."/>
            <person name="Wang X."/>
            <person name="Wang Z.-Y."/>
            <person name="Wassarman D.A."/>
            <person name="Weinstock G.M."/>
            <person name="Weissenbach J."/>
            <person name="Williams S.M."/>
            <person name="Woodage T."/>
            <person name="Worley K.C."/>
            <person name="Wu D."/>
            <person name="Yang S."/>
            <person name="Yao Q.A."/>
            <person name="Ye J."/>
            <person name="Yeh R.-F."/>
            <person name="Zaveri J.S."/>
            <person name="Zhan M."/>
            <person name="Zhang G."/>
            <person name="Zhao Q."/>
            <person name="Zheng L."/>
            <person name="Zheng X.H."/>
            <person name="Zhong F.N."/>
            <person name="Zhong W."/>
            <person name="Zhou X."/>
            <person name="Zhu S.C."/>
            <person name="Zhu X."/>
            <person name="Smith H.O."/>
            <person name="Gibbs R.A."/>
            <person name="Myers E.W."/>
            <person name="Rubin G.M."/>
            <person name="Venter J.C."/>
        </authorList>
    </citation>
    <scope>NUCLEOTIDE SEQUENCE [LARGE SCALE GENOMIC DNA]</scope>
    <source>
        <strain>Berkeley</strain>
    </source>
</reference>
<reference key="4">
    <citation type="journal article" date="2002" name="Genome Biol.">
        <title>Annotation of the Drosophila melanogaster euchromatic genome: a systematic review.</title>
        <authorList>
            <person name="Misra S."/>
            <person name="Crosby M.A."/>
            <person name="Mungall C.J."/>
            <person name="Matthews B.B."/>
            <person name="Campbell K.S."/>
            <person name="Hradecky P."/>
            <person name="Huang Y."/>
            <person name="Kaminker J.S."/>
            <person name="Millburn G.H."/>
            <person name="Prochnik S.E."/>
            <person name="Smith C.D."/>
            <person name="Tupy J.L."/>
            <person name="Whitfield E.J."/>
            <person name="Bayraktaroglu L."/>
            <person name="Berman B.P."/>
            <person name="Bettencourt B.R."/>
            <person name="Celniker S.E."/>
            <person name="de Grey A.D.N.J."/>
            <person name="Drysdale R.A."/>
            <person name="Harris N.L."/>
            <person name="Richter J."/>
            <person name="Russo S."/>
            <person name="Schroeder A.J."/>
            <person name="Shu S.Q."/>
            <person name="Stapleton M."/>
            <person name="Yamada C."/>
            <person name="Ashburner M."/>
            <person name="Gelbart W.M."/>
            <person name="Rubin G.M."/>
            <person name="Lewis S.E."/>
        </authorList>
    </citation>
    <scope>GENOME REANNOTATION</scope>
    <source>
        <strain>Berkeley</strain>
    </source>
</reference>
<reference key="5">
    <citation type="submission" date="2009-08" db="EMBL/GenBank/DDBJ databases">
        <authorList>
            <person name="Carlson J.W."/>
            <person name="Booth B."/>
            <person name="Frise E."/>
            <person name="Park S."/>
            <person name="Wan K.H."/>
            <person name="Yu C."/>
            <person name="Celniker S.E."/>
        </authorList>
    </citation>
    <scope>NUCLEOTIDE SEQUENCE [LARGE SCALE MRNA]</scope>
    <source>
        <strain>Berkeley</strain>
        <tissue>Embryo</tissue>
    </source>
</reference>
<reference key="6">
    <citation type="journal article" date="2000" name="Biochem. Biophys. Res. Commun.">
        <title>A Drosophila homolog of LIM-kinase phosphorylates cofilin and induces actin cytoskeletal reorganization.</title>
        <authorList>
            <person name="Ohashi K."/>
            <person name="Hosoya T."/>
            <person name="Takahashi K."/>
            <person name="Hing H."/>
            <person name="Mizuno K."/>
        </authorList>
    </citation>
    <scope>PHOSPHORYLATION</scope>
    <scope>MUTAGENESIS OF SER-3</scope>
</reference>
<reference key="7">
    <citation type="journal article" date="2001" name="Nat. Cell Biol.">
        <title>Cofilin/ADF is required for cell motility during Drosophila ovary development and oogenesis.</title>
        <authorList>
            <person name="Chen J."/>
            <person name="Godt D."/>
            <person name="Gunsalus K."/>
            <person name="Kiss I."/>
            <person name="Goldberg M."/>
            <person name="Laski F.A."/>
        </authorList>
    </citation>
    <scope>FUNCTION</scope>
    <scope>DISRUPTION PHENOTYPE</scope>
</reference>
<reference key="8">
    <citation type="journal article" date="2002" name="Cell">
        <title>Control of actin reorganization by Slingshot, a family of phosphatases that dephosphorylate ADF/cofilin.</title>
        <authorList>
            <person name="Niwa R."/>
            <person name="Nagata-Ohashi K."/>
            <person name="Takeichi M."/>
            <person name="Mizuno K."/>
            <person name="Uemura T."/>
        </authorList>
    </citation>
    <scope>DEPHOSPHORYLATION</scope>
</reference>
<reference key="9">
    <citation type="journal article" date="2004" name="Neuron">
        <title>Rho GTPases regulate axon growth through convergent and divergent signaling pathways.</title>
        <authorList>
            <person name="Ng J."/>
            <person name="Luo L."/>
        </authorList>
    </citation>
    <scope>FUNCTION</scope>
    <scope>PHOSPHORYLATION</scope>
    <scope>DEPHOSPHORYLATION</scope>
    <scope>DISRUPTION PHENOTYPE</scope>
    <scope>MUTAGENESIS OF SER-3</scope>
</reference>
<reference key="10">
    <citation type="journal article" date="2006" name="Development">
        <title>Twinstar, the Drosophila homolog of cofilin/ADF, is required for planar cell polarity patterning.</title>
        <authorList>
            <person name="Blair A."/>
            <person name="Tomlinson A."/>
            <person name="Pham H."/>
            <person name="Gunsalus K.C."/>
            <person name="Goldberg M.L."/>
            <person name="Laski F.A."/>
        </authorList>
    </citation>
    <scope>FUNCTION</scope>
    <scope>MUTAGENESIS OF VAL-27 AND 139-GLU--ARG-143</scope>
</reference>
<reference key="11">
    <citation type="journal article" date="2008" name="Dev. Biol.">
        <title>Cofilin/ADF is required for retinal elongation and morphogenesis of the Drosophila rhabdomere.</title>
        <authorList>
            <person name="Pham H."/>
            <person name="Yu H."/>
            <person name="Laski F.A."/>
        </authorList>
    </citation>
    <scope>FUNCTION</scope>
    <scope>DISRUPTION PHENOTYPE</scope>
</reference>
<reference key="12">
    <citation type="journal article" date="2009" name="J. Cell Biol.">
        <title>Actin remodeling by ADF/cofilin is required for cargo sorting at the trans-Golgi network.</title>
        <authorList>
            <person name="von Blume J."/>
            <person name="Duran J.M."/>
            <person name="Forlanelli E."/>
            <person name="Alleaume A.M."/>
            <person name="Egorov M."/>
            <person name="Polishchuk R."/>
            <person name="Molina H."/>
            <person name="Malhotra V."/>
        </authorList>
    </citation>
    <scope>FUNCTION</scope>
</reference>
<reference key="13">
    <citation type="journal article" date="2011" name="Development">
        <title>Regulation of cofilin phosphorylation and asymmetry in collective cell migration during morphogenesis.</title>
        <authorList>
            <person name="Zhang L."/>
            <person name="Luo J."/>
            <person name="Wan P."/>
            <person name="Wu J."/>
            <person name="Laski F."/>
            <person name="Chen J."/>
        </authorList>
    </citation>
    <scope>FUNCTION</scope>
</reference>
<reference key="14">
    <citation type="journal article" date="2012" name="PLoS ONE">
        <title>Cofilin/Twinstar phosphorylation levels increase in response to impaired coenzyme a metabolism.</title>
        <authorList>
            <person name="Siudeja K."/>
            <person name="Grzeschik N.A."/>
            <person name="Rana A."/>
            <person name="de Jong J."/>
            <person name="Sibon O.C."/>
        </authorList>
    </citation>
    <scope>PHOSPHORYLATION</scope>
</reference>
<reference key="15">
    <citation type="journal article" date="2012" name="Proc. Natl. Acad. Sci. U.S.A.">
        <title>Active maintenance of nuclear actin by importin 9 supports transcription.</title>
        <authorList>
            <person name="Dopie J."/>
            <person name="Skarp K.P."/>
            <person name="Rajakyla E.K."/>
            <person name="Tanhuanpaa K."/>
            <person name="Vartiainen M.K."/>
        </authorList>
    </citation>
    <scope>FUNCTION</scope>
</reference>
<reference key="16">
    <citation type="journal article" date="2016" name="Oncogene">
        <title>Twinstar/cofilin is required for regulation of epithelial integrity and tissue growth in Drosophila.</title>
        <authorList>
            <person name="Ko C."/>
            <person name="Kim Y.G."/>
            <person name="Le T.P."/>
            <person name="Choi K.W."/>
        </authorList>
    </citation>
    <scope>FUNCTION</scope>
    <scope>DISRUPTION PHENOTYPE</scope>
</reference>
<reference key="17">
    <citation type="submission" date="2014-09" db="PDB data bank">
        <title>Solution structure and dynamics of Twinstar from Drosophila melanogaster.</title>
        <authorList>
            <person name="Shukla V.K."/>
            <person name="Maheshwari D."/>
            <person name="Jain A."/>
            <person name="Tripathi S."/>
            <person name="Kumar D."/>
            <person name="Arora A."/>
        </authorList>
    </citation>
    <scope>STRUCTURE BY NMR</scope>
</reference>
<keyword id="KW-0002">3D-structure</keyword>
<keyword id="KW-0009">Actin-binding</keyword>
<keyword id="KW-0131">Cell cycle</keyword>
<keyword id="KW-0132">Cell division</keyword>
<keyword id="KW-0963">Cytoplasm</keyword>
<keyword id="KW-0206">Cytoskeleton</keyword>
<keyword id="KW-0539">Nucleus</keyword>
<keyword id="KW-0597">Phosphoprotein</keyword>
<keyword id="KW-1185">Reference proteome</keyword>
<sequence length="148" mass="17153">MASGVTVSDVCKTTYEEIKKDKKHRYVIFYIRDEKQIDVETVADRNAEYDQFLEDIQKCGPGECRYGLFDFEYMHQCQGTSESSKKQKLFLMSWCPDTAKVKKKMLYSSSFDALKKSLVGVQKYIQATDLSEASREAVEEKLRATDRQ</sequence>